<proteinExistence type="inferred from homology"/>
<dbReference type="EMBL" id="LT708304">
    <property type="protein sequence ID" value="SIU01050.1"/>
    <property type="molecule type" value="Genomic_DNA"/>
</dbReference>
<dbReference type="RefSeq" id="NP_856084.1">
    <property type="nucleotide sequence ID" value="NC_002945.3"/>
</dbReference>
<dbReference type="RefSeq" id="WP_003899314.1">
    <property type="nucleotide sequence ID" value="NC_002945.4"/>
</dbReference>
<dbReference type="SMR" id="P66506"/>
<dbReference type="KEGG" id="mbo:BQ2027_MB2435"/>
<dbReference type="PATRIC" id="fig|233413.5.peg.2679"/>
<dbReference type="Proteomes" id="UP000001419">
    <property type="component" value="Chromosome"/>
</dbReference>
<dbReference type="GO" id="GO:0005829">
    <property type="term" value="C:cytosol"/>
    <property type="evidence" value="ECO:0007669"/>
    <property type="project" value="TreeGrafter"/>
</dbReference>
<dbReference type="GO" id="GO:0015935">
    <property type="term" value="C:small ribosomal subunit"/>
    <property type="evidence" value="ECO:0007669"/>
    <property type="project" value="TreeGrafter"/>
</dbReference>
<dbReference type="GO" id="GO:0070181">
    <property type="term" value="F:small ribosomal subunit rRNA binding"/>
    <property type="evidence" value="ECO:0007669"/>
    <property type="project" value="TreeGrafter"/>
</dbReference>
<dbReference type="GO" id="GO:0003735">
    <property type="term" value="F:structural constituent of ribosome"/>
    <property type="evidence" value="ECO:0007669"/>
    <property type="project" value="InterPro"/>
</dbReference>
<dbReference type="GO" id="GO:0006412">
    <property type="term" value="P:translation"/>
    <property type="evidence" value="ECO:0007669"/>
    <property type="project" value="UniProtKB-UniRule"/>
</dbReference>
<dbReference type="FunFam" id="1.20.58.110:FF:000001">
    <property type="entry name" value="30S ribosomal protein S20"/>
    <property type="match status" value="1"/>
</dbReference>
<dbReference type="Gene3D" id="1.20.58.110">
    <property type="entry name" value="Ribosomal protein S20"/>
    <property type="match status" value="1"/>
</dbReference>
<dbReference type="HAMAP" id="MF_00500">
    <property type="entry name" value="Ribosomal_bS20"/>
    <property type="match status" value="1"/>
</dbReference>
<dbReference type="InterPro" id="IPR002583">
    <property type="entry name" value="Ribosomal_bS20"/>
</dbReference>
<dbReference type="InterPro" id="IPR036510">
    <property type="entry name" value="Ribosomal_bS20_sf"/>
</dbReference>
<dbReference type="NCBIfam" id="TIGR00029">
    <property type="entry name" value="S20"/>
    <property type="match status" value="1"/>
</dbReference>
<dbReference type="PANTHER" id="PTHR33398">
    <property type="entry name" value="30S RIBOSOMAL PROTEIN S20"/>
    <property type="match status" value="1"/>
</dbReference>
<dbReference type="PANTHER" id="PTHR33398:SF1">
    <property type="entry name" value="SMALL RIBOSOMAL SUBUNIT PROTEIN BS20C"/>
    <property type="match status" value="1"/>
</dbReference>
<dbReference type="Pfam" id="PF01649">
    <property type="entry name" value="Ribosomal_S20p"/>
    <property type="match status" value="1"/>
</dbReference>
<dbReference type="SUPFAM" id="SSF46992">
    <property type="entry name" value="Ribosomal protein S20"/>
    <property type="match status" value="1"/>
</dbReference>
<sequence>MANIKSQQKRNRTNERARLRNKAVKSSLRTAVRAFREAAHAGDKAKAAELLASTNRKLDKAASKGVIHKNQAANKKSALAQALNKL</sequence>
<reference key="1">
    <citation type="journal article" date="2003" name="Proc. Natl. Acad. Sci. U.S.A.">
        <title>The complete genome sequence of Mycobacterium bovis.</title>
        <authorList>
            <person name="Garnier T."/>
            <person name="Eiglmeier K."/>
            <person name="Camus J.-C."/>
            <person name="Medina N."/>
            <person name="Mansoor H."/>
            <person name="Pryor M."/>
            <person name="Duthoy S."/>
            <person name="Grondin S."/>
            <person name="Lacroix C."/>
            <person name="Monsempe C."/>
            <person name="Simon S."/>
            <person name="Harris B."/>
            <person name="Atkin R."/>
            <person name="Doggett J."/>
            <person name="Mayes R."/>
            <person name="Keating L."/>
            <person name="Wheeler P.R."/>
            <person name="Parkhill J."/>
            <person name="Barrell B.G."/>
            <person name="Cole S.T."/>
            <person name="Gordon S.V."/>
            <person name="Hewinson R.G."/>
        </authorList>
    </citation>
    <scope>NUCLEOTIDE SEQUENCE [LARGE SCALE GENOMIC DNA]</scope>
    <source>
        <strain>ATCC BAA-935 / AF2122/97</strain>
    </source>
</reference>
<reference key="2">
    <citation type="journal article" date="2017" name="Genome Announc.">
        <title>Updated reference genome sequence and annotation of Mycobacterium bovis AF2122/97.</title>
        <authorList>
            <person name="Malone K.M."/>
            <person name="Farrell D."/>
            <person name="Stuber T.P."/>
            <person name="Schubert O.T."/>
            <person name="Aebersold R."/>
            <person name="Robbe-Austerman S."/>
            <person name="Gordon S.V."/>
        </authorList>
    </citation>
    <scope>NUCLEOTIDE SEQUENCE [LARGE SCALE GENOMIC DNA]</scope>
    <scope>GENOME REANNOTATION</scope>
    <source>
        <strain>ATCC BAA-935 / AF2122/97</strain>
    </source>
</reference>
<keyword id="KW-1185">Reference proteome</keyword>
<keyword id="KW-0687">Ribonucleoprotein</keyword>
<keyword id="KW-0689">Ribosomal protein</keyword>
<keyword id="KW-0694">RNA-binding</keyword>
<keyword id="KW-0699">rRNA-binding</keyword>
<gene>
    <name evidence="1" type="primary">rpsT</name>
    <name type="ordered locus">BQ2027_MB2435</name>
</gene>
<protein>
    <recommendedName>
        <fullName evidence="1">Small ribosomal subunit protein bS20</fullName>
    </recommendedName>
    <alternativeName>
        <fullName evidence="3">30S ribosomal protein S20</fullName>
    </alternativeName>
</protein>
<name>RS20_MYCBO</name>
<accession>P66506</accession>
<accession>A0A1R3Y151</accession>
<accession>P71731</accession>
<accession>X2BL34</accession>
<evidence type="ECO:0000255" key="1">
    <source>
        <dbReference type="HAMAP-Rule" id="MF_00500"/>
    </source>
</evidence>
<evidence type="ECO:0000256" key="2">
    <source>
        <dbReference type="SAM" id="MobiDB-lite"/>
    </source>
</evidence>
<evidence type="ECO:0000305" key="3"/>
<comment type="function">
    <text evidence="1">Binds directly to 16S ribosomal RNA.</text>
</comment>
<comment type="similarity">
    <text evidence="1">Belongs to the bacterial ribosomal protein bS20 family.</text>
</comment>
<organism>
    <name type="scientific">Mycobacterium bovis (strain ATCC BAA-935 / AF2122/97)</name>
    <dbReference type="NCBI Taxonomy" id="233413"/>
    <lineage>
        <taxon>Bacteria</taxon>
        <taxon>Bacillati</taxon>
        <taxon>Actinomycetota</taxon>
        <taxon>Actinomycetes</taxon>
        <taxon>Mycobacteriales</taxon>
        <taxon>Mycobacteriaceae</taxon>
        <taxon>Mycobacterium</taxon>
        <taxon>Mycobacterium tuberculosis complex</taxon>
    </lineage>
</organism>
<feature type="chain" id="PRO_0000167989" description="Small ribosomal subunit protein bS20">
    <location>
        <begin position="1"/>
        <end position="86"/>
    </location>
</feature>
<feature type="region of interest" description="Disordered" evidence="2">
    <location>
        <begin position="1"/>
        <end position="25"/>
    </location>
</feature>